<protein>
    <recommendedName>
        <fullName evidence="2">Translation initiation factor IF-2</fullName>
    </recommendedName>
</protein>
<dbReference type="EMBL" id="AE016958">
    <property type="protein sequence ID" value="AAS05224.1"/>
    <property type="molecule type" value="Genomic_DNA"/>
</dbReference>
<dbReference type="RefSeq" id="WP_010949773.1">
    <property type="nucleotide sequence ID" value="NC_002944.2"/>
</dbReference>
<dbReference type="SMR" id="Q73VV4"/>
<dbReference type="STRING" id="262316.MAP_2907c"/>
<dbReference type="KEGG" id="mpa:MAP_2907c"/>
<dbReference type="PATRIC" id="fig|262316.17.peg.3082"/>
<dbReference type="eggNOG" id="COG0481">
    <property type="taxonomic scope" value="Bacteria"/>
</dbReference>
<dbReference type="HOGENOM" id="CLU_006301_9_3_11"/>
<dbReference type="Proteomes" id="UP000000580">
    <property type="component" value="Chromosome"/>
</dbReference>
<dbReference type="GO" id="GO:0005829">
    <property type="term" value="C:cytosol"/>
    <property type="evidence" value="ECO:0007669"/>
    <property type="project" value="TreeGrafter"/>
</dbReference>
<dbReference type="GO" id="GO:0005525">
    <property type="term" value="F:GTP binding"/>
    <property type="evidence" value="ECO:0007669"/>
    <property type="project" value="UniProtKB-KW"/>
</dbReference>
<dbReference type="GO" id="GO:0003924">
    <property type="term" value="F:GTPase activity"/>
    <property type="evidence" value="ECO:0007669"/>
    <property type="project" value="UniProtKB-UniRule"/>
</dbReference>
<dbReference type="GO" id="GO:0003743">
    <property type="term" value="F:translation initiation factor activity"/>
    <property type="evidence" value="ECO:0007669"/>
    <property type="project" value="UniProtKB-UniRule"/>
</dbReference>
<dbReference type="CDD" id="cd01887">
    <property type="entry name" value="IF2_eIF5B"/>
    <property type="match status" value="1"/>
</dbReference>
<dbReference type="CDD" id="cd03702">
    <property type="entry name" value="IF2_mtIF2_II"/>
    <property type="match status" value="1"/>
</dbReference>
<dbReference type="CDD" id="cd03692">
    <property type="entry name" value="mtIF2_IVc"/>
    <property type="match status" value="1"/>
</dbReference>
<dbReference type="FunFam" id="1.10.10.2480:FF:000003">
    <property type="entry name" value="Translation initiation factor IF-2"/>
    <property type="match status" value="1"/>
</dbReference>
<dbReference type="FunFam" id="2.40.30.10:FF:000007">
    <property type="entry name" value="Translation initiation factor IF-2"/>
    <property type="match status" value="1"/>
</dbReference>
<dbReference type="FunFam" id="2.40.30.10:FF:000008">
    <property type="entry name" value="Translation initiation factor IF-2"/>
    <property type="match status" value="1"/>
</dbReference>
<dbReference type="FunFam" id="3.40.50.10050:FF:000001">
    <property type="entry name" value="Translation initiation factor IF-2"/>
    <property type="match status" value="1"/>
</dbReference>
<dbReference type="FunFam" id="3.40.50.300:FF:000019">
    <property type="entry name" value="Translation initiation factor IF-2"/>
    <property type="match status" value="1"/>
</dbReference>
<dbReference type="Gene3D" id="1.10.10.2480">
    <property type="match status" value="1"/>
</dbReference>
<dbReference type="Gene3D" id="3.40.50.300">
    <property type="entry name" value="P-loop containing nucleotide triphosphate hydrolases"/>
    <property type="match status" value="1"/>
</dbReference>
<dbReference type="Gene3D" id="2.40.30.10">
    <property type="entry name" value="Translation factors"/>
    <property type="match status" value="2"/>
</dbReference>
<dbReference type="Gene3D" id="3.40.50.10050">
    <property type="entry name" value="Translation initiation factor IF- 2, domain 3"/>
    <property type="match status" value="1"/>
</dbReference>
<dbReference type="HAMAP" id="MF_00100_B">
    <property type="entry name" value="IF_2_B"/>
    <property type="match status" value="1"/>
</dbReference>
<dbReference type="InterPro" id="IPR053905">
    <property type="entry name" value="EF-G-like_DII"/>
</dbReference>
<dbReference type="InterPro" id="IPR044145">
    <property type="entry name" value="IF2_II"/>
</dbReference>
<dbReference type="InterPro" id="IPR006847">
    <property type="entry name" value="IF2_N"/>
</dbReference>
<dbReference type="InterPro" id="IPR027417">
    <property type="entry name" value="P-loop_NTPase"/>
</dbReference>
<dbReference type="InterPro" id="IPR005225">
    <property type="entry name" value="Small_GTP-bd"/>
</dbReference>
<dbReference type="InterPro" id="IPR000795">
    <property type="entry name" value="T_Tr_GTP-bd_dom"/>
</dbReference>
<dbReference type="InterPro" id="IPR000178">
    <property type="entry name" value="TF_IF2_bacterial-like"/>
</dbReference>
<dbReference type="InterPro" id="IPR015760">
    <property type="entry name" value="TIF_IF2"/>
</dbReference>
<dbReference type="InterPro" id="IPR023115">
    <property type="entry name" value="TIF_IF2_dom3"/>
</dbReference>
<dbReference type="InterPro" id="IPR036925">
    <property type="entry name" value="TIF_IF2_dom3_sf"/>
</dbReference>
<dbReference type="InterPro" id="IPR009000">
    <property type="entry name" value="Transl_B-barrel_sf"/>
</dbReference>
<dbReference type="NCBIfam" id="TIGR00487">
    <property type="entry name" value="IF-2"/>
    <property type="match status" value="1"/>
</dbReference>
<dbReference type="NCBIfam" id="TIGR00231">
    <property type="entry name" value="small_GTP"/>
    <property type="match status" value="1"/>
</dbReference>
<dbReference type="PANTHER" id="PTHR43381:SF5">
    <property type="entry name" value="TR-TYPE G DOMAIN-CONTAINING PROTEIN"/>
    <property type="match status" value="1"/>
</dbReference>
<dbReference type="PANTHER" id="PTHR43381">
    <property type="entry name" value="TRANSLATION INITIATION FACTOR IF-2-RELATED"/>
    <property type="match status" value="1"/>
</dbReference>
<dbReference type="Pfam" id="PF22042">
    <property type="entry name" value="EF-G_D2"/>
    <property type="match status" value="1"/>
</dbReference>
<dbReference type="Pfam" id="PF00009">
    <property type="entry name" value="GTP_EFTU"/>
    <property type="match status" value="1"/>
</dbReference>
<dbReference type="Pfam" id="PF11987">
    <property type="entry name" value="IF-2"/>
    <property type="match status" value="1"/>
</dbReference>
<dbReference type="Pfam" id="PF04760">
    <property type="entry name" value="IF2_N"/>
    <property type="match status" value="2"/>
</dbReference>
<dbReference type="PRINTS" id="PR00315">
    <property type="entry name" value="ELONGATNFCT"/>
</dbReference>
<dbReference type="SUPFAM" id="SSF52156">
    <property type="entry name" value="Initiation factor IF2/eIF5b, domain 3"/>
    <property type="match status" value="1"/>
</dbReference>
<dbReference type="SUPFAM" id="SSF52540">
    <property type="entry name" value="P-loop containing nucleoside triphosphate hydrolases"/>
    <property type="match status" value="1"/>
</dbReference>
<dbReference type="SUPFAM" id="SSF50447">
    <property type="entry name" value="Translation proteins"/>
    <property type="match status" value="2"/>
</dbReference>
<dbReference type="PROSITE" id="PS51722">
    <property type="entry name" value="G_TR_2"/>
    <property type="match status" value="1"/>
</dbReference>
<dbReference type="PROSITE" id="PS01176">
    <property type="entry name" value="IF2"/>
    <property type="match status" value="1"/>
</dbReference>
<feature type="chain" id="PRO_0000228214" description="Translation initiation factor IF-2">
    <location>
        <begin position="1"/>
        <end position="925"/>
    </location>
</feature>
<feature type="domain" description="tr-type G">
    <location>
        <begin position="421"/>
        <end position="592"/>
    </location>
</feature>
<feature type="region of interest" description="Disordered" evidence="3">
    <location>
        <begin position="52"/>
        <end position="84"/>
    </location>
</feature>
<feature type="region of interest" description="Disordered" evidence="3">
    <location>
        <begin position="98"/>
        <end position="326"/>
    </location>
</feature>
<feature type="region of interest" description="G1" evidence="1">
    <location>
        <begin position="430"/>
        <end position="437"/>
    </location>
</feature>
<feature type="region of interest" description="G2" evidence="1">
    <location>
        <begin position="455"/>
        <end position="459"/>
    </location>
</feature>
<feature type="region of interest" description="G3" evidence="1">
    <location>
        <begin position="480"/>
        <end position="483"/>
    </location>
</feature>
<feature type="region of interest" description="G4" evidence="1">
    <location>
        <begin position="534"/>
        <end position="537"/>
    </location>
</feature>
<feature type="region of interest" description="G5" evidence="1">
    <location>
        <begin position="570"/>
        <end position="572"/>
    </location>
</feature>
<feature type="compositionally biased region" description="Low complexity" evidence="3">
    <location>
        <begin position="57"/>
        <end position="68"/>
    </location>
</feature>
<feature type="compositionally biased region" description="Basic and acidic residues" evidence="3">
    <location>
        <begin position="69"/>
        <end position="84"/>
    </location>
</feature>
<feature type="compositionally biased region" description="Low complexity" evidence="3">
    <location>
        <begin position="98"/>
        <end position="138"/>
    </location>
</feature>
<feature type="compositionally biased region" description="Pro residues" evidence="3">
    <location>
        <begin position="139"/>
        <end position="169"/>
    </location>
</feature>
<feature type="compositionally biased region" description="Pro residues" evidence="3">
    <location>
        <begin position="193"/>
        <end position="207"/>
    </location>
</feature>
<feature type="compositionally biased region" description="Gly residues" evidence="3">
    <location>
        <begin position="236"/>
        <end position="296"/>
    </location>
</feature>
<feature type="compositionally biased region" description="Basic residues" evidence="3">
    <location>
        <begin position="300"/>
        <end position="309"/>
    </location>
</feature>
<feature type="binding site" evidence="2">
    <location>
        <begin position="430"/>
        <end position="437"/>
    </location>
    <ligand>
        <name>GTP</name>
        <dbReference type="ChEBI" id="CHEBI:37565"/>
    </ligand>
</feature>
<feature type="binding site" evidence="2">
    <location>
        <begin position="480"/>
        <end position="484"/>
    </location>
    <ligand>
        <name>GTP</name>
        <dbReference type="ChEBI" id="CHEBI:37565"/>
    </ligand>
</feature>
<feature type="binding site" evidence="2">
    <location>
        <begin position="534"/>
        <end position="537"/>
    </location>
    <ligand>
        <name>GTP</name>
        <dbReference type="ChEBI" id="CHEBI:37565"/>
    </ligand>
</feature>
<gene>
    <name evidence="2" type="primary">infB</name>
    <name type="ordered locus">MAP_2907c</name>
</gene>
<proteinExistence type="inferred from homology"/>
<comment type="function">
    <text evidence="2">One of the essential components for the initiation of protein synthesis. Protects formylmethionyl-tRNA from spontaneous hydrolysis and promotes its binding to the 30S ribosomal subunits. Also involved in the hydrolysis of GTP during the formation of the 70S ribosomal complex.</text>
</comment>
<comment type="subcellular location">
    <subcellularLocation>
        <location evidence="2">Cytoplasm</location>
    </subcellularLocation>
</comment>
<comment type="similarity">
    <text evidence="2">Belongs to the TRAFAC class translation factor GTPase superfamily. Classic translation factor GTPase family. IF-2 subfamily.</text>
</comment>
<evidence type="ECO:0000250" key="1"/>
<evidence type="ECO:0000255" key="2">
    <source>
        <dbReference type="HAMAP-Rule" id="MF_00100"/>
    </source>
</evidence>
<evidence type="ECO:0000256" key="3">
    <source>
        <dbReference type="SAM" id="MobiDB-lite"/>
    </source>
</evidence>
<keyword id="KW-0963">Cytoplasm</keyword>
<keyword id="KW-0342">GTP-binding</keyword>
<keyword id="KW-0396">Initiation factor</keyword>
<keyword id="KW-0547">Nucleotide-binding</keyword>
<keyword id="KW-0648">Protein biosynthesis</keyword>
<keyword id="KW-1185">Reference proteome</keyword>
<reference key="1">
    <citation type="journal article" date="2005" name="Proc. Natl. Acad. Sci. U.S.A.">
        <title>The complete genome sequence of Mycobacterium avium subspecies paratuberculosis.</title>
        <authorList>
            <person name="Li L."/>
            <person name="Bannantine J.P."/>
            <person name="Zhang Q."/>
            <person name="Amonsin A."/>
            <person name="May B.J."/>
            <person name="Alt D."/>
            <person name="Banerji N."/>
            <person name="Kanjilal S."/>
            <person name="Kapur V."/>
        </authorList>
    </citation>
    <scope>NUCLEOTIDE SEQUENCE [LARGE SCALE GENOMIC DNA]</scope>
    <source>
        <strain>ATCC BAA-968 / K-10</strain>
    </source>
</reference>
<name>IF2_MYCPA</name>
<accession>Q73VV4</accession>
<organism>
    <name type="scientific">Mycolicibacterium paratuberculosis (strain ATCC BAA-968 / K-10)</name>
    <name type="common">Mycobacterium paratuberculosis</name>
    <dbReference type="NCBI Taxonomy" id="262316"/>
    <lineage>
        <taxon>Bacteria</taxon>
        <taxon>Bacillati</taxon>
        <taxon>Actinomycetota</taxon>
        <taxon>Actinomycetes</taxon>
        <taxon>Mycobacteriales</taxon>
        <taxon>Mycobacteriaceae</taxon>
        <taxon>Mycobacterium</taxon>
        <taxon>Mycobacterium avium complex (MAC)</taxon>
    </lineage>
</organism>
<sequence length="925" mass="96526">MAGKARVHELAKELGVTSKEVLARLNEQGEFVKSASSTVEAPVARRLRESFGGGKAAEGAAKAPAKAAAKGDAKTAAKGDVKAPDKALDAALDNAIKAGGNGEAAAPPAQPGGTATTPAAQATPEAPARPGPAAARPSAPAPGQPKPPAPGQPPRPGATPGPRPGPAPKPAARTPRVGNNPFSSAQPVDRPIPRPVPRPGAPRPGAPRPGASPGNMPPRPGGVGGPGRPARPGAPRPGGGRPGGPGGRDGGGGNYRGGGVGASPGGGGGFRGRPGGGGGGRPGQRGGAAGAFGRPGGAPRRGRKSKRQKRQEYDSMQAPVVGGVRLPHGNGETIRLARGASLSDFAEKIDANPASLVQALFNLGEMVTATQSVGDETLELLGSEMNYNVQVVSPEDEDRELLESFDLTYGEDEGTEEDLQTRPPVVTVMGHVDHGKTRLLDTIRKANVREAEAGGITQHIGAYQVTVEHDGVERPITFIDTPGHEAFTAMRARGAKATDIAILVVAADDGVMPQTVEAINHAQAADVPIVVAVNKIDVEGADPQKIRGQLTEYGLVPEEFGGDTMFVDISAKQGTNIDQLLEAVLLTADAALDLRANPDMEAQGVAIEAHLDRGRGPVATVLIQRGTLRVGDSIVAGDAYGRVRRMVDEHGDDVEEALPSRPVQVIGFTSVPGAGDNLLVVDEDRIARQIADKRSARKRNALAARSRKRISLEDLDSALKETSQLNLILKGDNAGTVEALEEALMGIQIDDEVALRVIDRGVGGITETNVNLASASDAVIIGFNVRAEGKATELANREGVEIRYYSVIYQAIDEIEKALRGMLKPIYEENQLGRAEIRAIFRSSKVGIIAGCMITSGVVRRNAKARLLRDNVVVSENLTINSLRREKDDVTEVREGFECGMTLGYSDIKEGDVIESYELVQKERT</sequence>